<feature type="chain" id="PRO_0000452196" description="Di/tripeptide transport system permease protein DppC">
    <location>
        <begin position="1"/>
        <end position="303"/>
    </location>
</feature>
<feature type="transmembrane region" description="Helical" evidence="2">
    <location>
        <begin position="33"/>
        <end position="53"/>
    </location>
</feature>
<feature type="transmembrane region" description="Helical" evidence="2">
    <location>
        <begin position="103"/>
        <end position="123"/>
    </location>
</feature>
<feature type="transmembrane region" description="Helical" evidence="2">
    <location>
        <begin position="131"/>
        <end position="151"/>
    </location>
</feature>
<feature type="transmembrane region" description="Helical" evidence="2">
    <location>
        <begin position="152"/>
        <end position="172"/>
    </location>
</feature>
<feature type="transmembrane region" description="Helical" evidence="2">
    <location>
        <begin position="202"/>
        <end position="222"/>
    </location>
</feature>
<feature type="transmembrane region" description="Helical" evidence="2">
    <location>
        <begin position="225"/>
        <end position="245"/>
    </location>
</feature>
<feature type="transmembrane region" description="Helical" evidence="2">
    <location>
        <begin position="267"/>
        <end position="287"/>
    </location>
</feature>
<feature type="domain" description="ABC transmembrane type-1" evidence="3">
    <location>
        <begin position="99"/>
        <end position="288"/>
    </location>
</feature>
<evidence type="ECO:0000250" key="1">
    <source>
        <dbReference type="UniProtKB" id="P0AEG1"/>
    </source>
</evidence>
<evidence type="ECO:0000255" key="2"/>
<evidence type="ECO:0000255" key="3">
    <source>
        <dbReference type="PROSITE-ProRule" id="PRU00441"/>
    </source>
</evidence>
<evidence type="ECO:0000269" key="4">
    <source>
    </source>
</evidence>
<evidence type="ECO:0000303" key="5">
    <source>
    </source>
</evidence>
<evidence type="ECO:0000305" key="6"/>
<evidence type="ECO:0000312" key="7">
    <source>
        <dbReference type="EMBL" id="ABJ13771.1"/>
    </source>
</evidence>
<gene>
    <name evidence="5" type="primary">dppC</name>
    <name evidence="7" type="ordered locus">PA14_58450</name>
</gene>
<protein>
    <recommendedName>
        <fullName evidence="6">Di/tripeptide transport system permease protein DppC</fullName>
    </recommendedName>
</protein>
<keyword id="KW-0997">Cell inner membrane</keyword>
<keyword id="KW-1003">Cell membrane</keyword>
<keyword id="KW-0472">Membrane</keyword>
<keyword id="KW-0571">Peptide transport</keyword>
<keyword id="KW-0653">Protein transport</keyword>
<keyword id="KW-0812">Transmembrane</keyword>
<keyword id="KW-1133">Transmembrane helix</keyword>
<keyword id="KW-0813">Transport</keyword>
<proteinExistence type="evidence at protein level"/>
<comment type="function">
    <text evidence="4 6">Part of the ABC transporter DppABCDF involved in the uptake of various di/tripeptides (PubMed:25338022). Is also involved in the uptake of phaseolotoxin, a toxic tripeptide inhibiting the enzyme ornithine carbamoyltransferase (PubMed:25338022). Responsible for the translocation of the substrate across the membrane (Probable).</text>
</comment>
<comment type="subunit">
    <text evidence="4">The complex is composed of two ATP-binding proteins (DppD and DppF), two transmembrane proteins (DppB and DppC) and a solute-binding protein (DppA1-A5) (PubMed:25338022). Five orthologous SBPs (DppA1-A5) are present in P.aeruginosa, which increases the substrate specificity of the DppBCDF transporter (PubMed:25338022).</text>
</comment>
<comment type="subcellular location">
    <subcellularLocation>
        <location evidence="1">Cell inner membrane</location>
        <topology evidence="2">Multi-pass membrane protein</topology>
    </subcellularLocation>
</comment>
<comment type="disruption phenotype">
    <text evidence="4">Deletion of the dppBCDF operon leads to reduced ability to utilize di/tripeptides as nitrogen source.</text>
</comment>
<comment type="similarity">
    <text evidence="6">Belongs to the binding-protein-dependent transport system permease family. OppBC subfamily.</text>
</comment>
<sequence length="303" mass="32363">MNAMHNAPASDPSLVYPSPLKEFWQSFAHNKGALGGLLFMLLIVFCALFAPWVAPYDPSEQFRDFLLTPPSWLEGGQARFLLGTDELGRDLLSRLIHGARLSLLIGLSSVVISLIPGILLGLLAGFSPNRAGPLIMRLMDIMLALPSLLLAVAIVAILGPGLINTVIAIAIVSLPAYVRLTRAAVMTELNRDYVTASRLAGAGTLRLMFVCVLPNCMAPLIVQATLSFSSAILDAAALGFLGLGVQPPTPEWGTMLASARDYIERAWWVVSLPGLTILLSVLAINLMGDGLRDALDPKLKNAA</sequence>
<reference key="1">
    <citation type="journal article" date="2006" name="Genome Biol.">
        <title>Genomic analysis reveals that Pseudomonas aeruginosa virulence is combinatorial.</title>
        <authorList>
            <person name="Lee D.G."/>
            <person name="Urbach J.M."/>
            <person name="Wu G."/>
            <person name="Liberati N.T."/>
            <person name="Feinbaum R.L."/>
            <person name="Miyata S."/>
            <person name="Diggins L.T."/>
            <person name="He J."/>
            <person name="Saucier M."/>
            <person name="Deziel E."/>
            <person name="Friedman L."/>
            <person name="Li L."/>
            <person name="Grills G."/>
            <person name="Montgomery K."/>
            <person name="Kucherlapati R."/>
            <person name="Rahme L.G."/>
            <person name="Ausubel F.M."/>
        </authorList>
    </citation>
    <scope>NUCLEOTIDE SEQUENCE [LARGE SCALE GENOMIC DNA]</scope>
    <source>
        <strain>UCBPP-PA14</strain>
    </source>
</reference>
<reference key="2">
    <citation type="journal article" date="2014" name="PLoS ONE">
        <title>High-throughput screening of dipeptide utilization mediated by the ABC transporter DppBCDF and its substrate-binding proteins DppA1-A5 in Pseudomonas aeruginosa.</title>
        <authorList>
            <person name="Pletzer D."/>
            <person name="Lafon C."/>
            <person name="Braun Y."/>
            <person name="Koehler T."/>
            <person name="Page M.G."/>
            <person name="Mourez M."/>
            <person name="Weingart H."/>
        </authorList>
    </citation>
    <scope>FUNCTION</scope>
    <scope>SUBUNIT</scope>
    <scope>DISRUPTION PHENOTYPE</scope>
    <source>
        <strain>UCBPP-PA14</strain>
    </source>
</reference>
<organism>
    <name type="scientific">Pseudomonas aeruginosa (strain UCBPP-PA14)</name>
    <dbReference type="NCBI Taxonomy" id="208963"/>
    <lineage>
        <taxon>Bacteria</taxon>
        <taxon>Pseudomonadati</taxon>
        <taxon>Pseudomonadota</taxon>
        <taxon>Gammaproteobacteria</taxon>
        <taxon>Pseudomonadales</taxon>
        <taxon>Pseudomonadaceae</taxon>
        <taxon>Pseudomonas</taxon>
    </lineage>
</organism>
<name>DPPC_PSEAB</name>
<dbReference type="EMBL" id="CP000438">
    <property type="protein sequence ID" value="ABJ13771.1"/>
    <property type="molecule type" value="Genomic_DNA"/>
</dbReference>
<dbReference type="RefSeq" id="WP_003094448.1">
    <property type="nucleotide sequence ID" value="NZ_CP034244.1"/>
</dbReference>
<dbReference type="SMR" id="A0A0H2ZFV0"/>
<dbReference type="KEGG" id="pau:PA14_58450"/>
<dbReference type="HOGENOM" id="CLU_028518_1_1_6"/>
<dbReference type="BioCyc" id="PAER208963:G1G74-4923-MONOMER"/>
<dbReference type="Proteomes" id="UP000000653">
    <property type="component" value="Chromosome"/>
</dbReference>
<dbReference type="GO" id="GO:0005886">
    <property type="term" value="C:plasma membrane"/>
    <property type="evidence" value="ECO:0007669"/>
    <property type="project" value="UniProtKB-SubCell"/>
</dbReference>
<dbReference type="GO" id="GO:0071916">
    <property type="term" value="F:dipeptide transmembrane transporter activity"/>
    <property type="evidence" value="ECO:0007669"/>
    <property type="project" value="TreeGrafter"/>
</dbReference>
<dbReference type="GO" id="GO:0015031">
    <property type="term" value="P:protein transport"/>
    <property type="evidence" value="ECO:0007669"/>
    <property type="project" value="UniProtKB-KW"/>
</dbReference>
<dbReference type="CDD" id="cd06261">
    <property type="entry name" value="TM_PBP2"/>
    <property type="match status" value="1"/>
</dbReference>
<dbReference type="FunFam" id="1.10.3720.10:FF:000007">
    <property type="entry name" value="Dipeptide ABC transporter permease DppC"/>
    <property type="match status" value="1"/>
</dbReference>
<dbReference type="Gene3D" id="1.10.3720.10">
    <property type="entry name" value="MetI-like"/>
    <property type="match status" value="1"/>
</dbReference>
<dbReference type="InterPro" id="IPR050366">
    <property type="entry name" value="BP-dependent_transpt_permease"/>
</dbReference>
<dbReference type="InterPro" id="IPR000515">
    <property type="entry name" value="MetI-like"/>
</dbReference>
<dbReference type="InterPro" id="IPR035906">
    <property type="entry name" value="MetI-like_sf"/>
</dbReference>
<dbReference type="InterPro" id="IPR025966">
    <property type="entry name" value="OppC_N"/>
</dbReference>
<dbReference type="PANTHER" id="PTHR43386:SF1">
    <property type="entry name" value="D,D-DIPEPTIDE TRANSPORT SYSTEM PERMEASE PROTEIN DDPC-RELATED"/>
    <property type="match status" value="1"/>
</dbReference>
<dbReference type="PANTHER" id="PTHR43386">
    <property type="entry name" value="OLIGOPEPTIDE TRANSPORT SYSTEM PERMEASE PROTEIN APPC"/>
    <property type="match status" value="1"/>
</dbReference>
<dbReference type="Pfam" id="PF00528">
    <property type="entry name" value="BPD_transp_1"/>
    <property type="match status" value="1"/>
</dbReference>
<dbReference type="Pfam" id="PF12911">
    <property type="entry name" value="OppC_N"/>
    <property type="match status" value="1"/>
</dbReference>
<dbReference type="SUPFAM" id="SSF161098">
    <property type="entry name" value="MetI-like"/>
    <property type="match status" value="1"/>
</dbReference>
<dbReference type="PROSITE" id="PS50928">
    <property type="entry name" value="ABC_TM1"/>
    <property type="match status" value="1"/>
</dbReference>
<accession>A0A0H2ZFV0</accession>